<sequence length="402" mass="46941">MYTSEEKCNQRTQKRKIYNVCPRKGKKIFIHMHEIIQIDGHIYQCLECKQNFCENLALIMCERTHTGEKPYKCDMCEKTFVQSSDLTSHQRIHNYEKPYKCSKCEKSFWHHLALSGHQRTHAGKKFYTCDICGKNFGQSSDLLVHQRSHTGEKPYLCSECDKCFSRSTNLIRHRRTHTGEKPFKCLECEKAFSGKSDLISHQRTHTGERPYKCNKCEKSYRHRSAFIVHKRVHTGEKPYKCGACEKCFGQKSDLIVHQRVHTGEKPYKCLECMRSFTRSANLIRHQATHTHTFKCLEYEKSFNCSSDLIVHQRIHMEEKPHQWSACESGFLLGMDFVAQQKMRTQTEELHYKYTVCDKSFHQSSALLQHQTVHIGEKPFVCNVSEKGLELSPPHASEASQMS</sequence>
<dbReference type="EMBL" id="AY376736">
    <property type="protein sequence ID" value="AAQ85127.1"/>
    <property type="molecule type" value="mRNA"/>
</dbReference>
<dbReference type="EMBL" id="AK027046">
    <property type="protein sequence ID" value="BAB15637.1"/>
    <property type="status" value="ALT_INIT"/>
    <property type="molecule type" value="mRNA"/>
</dbReference>
<dbReference type="EMBL" id="AK290038">
    <property type="protein sequence ID" value="BAF82727.1"/>
    <property type="molecule type" value="mRNA"/>
</dbReference>
<dbReference type="EMBL" id="BC050425">
    <property type="protein sequence ID" value="AAH50425.2"/>
    <property type="molecule type" value="mRNA"/>
</dbReference>
<dbReference type="EMBL" id="BC074772">
    <property type="protein sequence ID" value="AAH74772.1"/>
    <property type="molecule type" value="mRNA"/>
</dbReference>
<dbReference type="EMBL" id="BC119669">
    <property type="protein sequence ID" value="AAI19670.1"/>
    <property type="molecule type" value="mRNA"/>
</dbReference>
<dbReference type="CCDS" id="CCDS4617.1"/>
<dbReference type="RefSeq" id="NP_001229726.1">
    <property type="nucleotide sequence ID" value="NM_001242797.2"/>
</dbReference>
<dbReference type="RefSeq" id="NP_001229727.1">
    <property type="nucleotide sequence ID" value="NM_001242798.2"/>
</dbReference>
<dbReference type="RefSeq" id="NP_001229728.1">
    <property type="nucleotide sequence ID" value="NM_001242799.2"/>
</dbReference>
<dbReference type="RefSeq" id="NP_078915.2">
    <property type="nucleotide sequence ID" value="NM_024639.4"/>
</dbReference>
<dbReference type="SMR" id="Q6U7Q0"/>
<dbReference type="BioGRID" id="122813">
    <property type="interactions" value="4"/>
</dbReference>
<dbReference type="FunCoup" id="Q6U7Q0">
    <property type="interactions" value="887"/>
</dbReference>
<dbReference type="STRING" id="9606.ENSP00000482607"/>
<dbReference type="GlyCosmos" id="Q6U7Q0">
    <property type="glycosylation" value="2 sites, 1 glycan"/>
</dbReference>
<dbReference type="GlyGen" id="Q6U7Q0">
    <property type="glycosylation" value="3 sites, 1 N-linked glycan (1 site), 1 O-linked glycan (2 sites)"/>
</dbReference>
<dbReference type="iPTMnet" id="Q6U7Q0"/>
<dbReference type="PhosphoSitePlus" id="Q6U7Q0"/>
<dbReference type="BioMuta" id="ZNF322"/>
<dbReference type="DMDM" id="82582384"/>
<dbReference type="jPOST" id="Q6U7Q0"/>
<dbReference type="MassIVE" id="Q6U7Q0"/>
<dbReference type="PaxDb" id="9606-ENSP00000482607"/>
<dbReference type="PeptideAtlas" id="Q6U7Q0"/>
<dbReference type="ProteomicsDB" id="67397"/>
<dbReference type="Antibodypedia" id="11103">
    <property type="antibodies" value="120 antibodies from 18 providers"/>
</dbReference>
<dbReference type="DNASU" id="79692"/>
<dbReference type="Ensembl" id="ENST00000415922.7">
    <property type="protein sequence ID" value="ENSP00000418897.1"/>
    <property type="gene ID" value="ENSG00000181315.11"/>
</dbReference>
<dbReference type="Ensembl" id="ENST00000456172.5">
    <property type="protein sequence ID" value="ENSP00000478899.1"/>
    <property type="gene ID" value="ENSG00000181315.11"/>
</dbReference>
<dbReference type="Ensembl" id="ENST00000471278.5">
    <property type="protein sequence ID" value="ENSP00000419728.1"/>
    <property type="gene ID" value="ENSG00000181315.11"/>
</dbReference>
<dbReference type="Ensembl" id="ENST00000607204.5">
    <property type="protein sequence ID" value="ENSP00000483223.1"/>
    <property type="gene ID" value="ENSG00000181315.11"/>
</dbReference>
<dbReference type="Ensembl" id="ENST00000622479.4">
    <property type="protein sequence ID" value="ENSP00000482607.1"/>
    <property type="gene ID" value="ENSG00000181315.11"/>
</dbReference>
<dbReference type="GeneID" id="79692"/>
<dbReference type="KEGG" id="hsa:79692"/>
<dbReference type="MANE-Select" id="ENST00000415922.7">
    <property type="protein sequence ID" value="ENSP00000418897.1"/>
    <property type="RefSeq nucleotide sequence ID" value="NM_024639.5"/>
    <property type="RefSeq protein sequence ID" value="NP_078915.2"/>
</dbReference>
<dbReference type="UCSC" id="uc003nil.4">
    <property type="organism name" value="human"/>
</dbReference>
<dbReference type="AGR" id="HGNC:23640"/>
<dbReference type="CTD" id="79692"/>
<dbReference type="DisGeNET" id="79692"/>
<dbReference type="GeneCards" id="ZNF322"/>
<dbReference type="HGNC" id="HGNC:23640">
    <property type="gene designation" value="ZNF322"/>
</dbReference>
<dbReference type="HPA" id="ENSG00000181315">
    <property type="expression patterns" value="Low tissue specificity"/>
</dbReference>
<dbReference type="MIM" id="610847">
    <property type="type" value="gene"/>
</dbReference>
<dbReference type="neXtProt" id="NX_Q6U7Q0"/>
<dbReference type="OpenTargets" id="ENSG00000181315"/>
<dbReference type="PharmGKB" id="PA134861342"/>
<dbReference type="VEuPathDB" id="HostDB:ENSG00000181315"/>
<dbReference type="eggNOG" id="KOG1721">
    <property type="taxonomic scope" value="Eukaryota"/>
</dbReference>
<dbReference type="GeneTree" id="ENSGT00940000162956"/>
<dbReference type="HOGENOM" id="CLU_002678_44_10_1"/>
<dbReference type="InParanoid" id="Q6U7Q0"/>
<dbReference type="OMA" id="CNVSDKG"/>
<dbReference type="OrthoDB" id="6077919at2759"/>
<dbReference type="PAN-GO" id="Q6U7Q0">
    <property type="GO annotations" value="3 GO annotations based on evolutionary models"/>
</dbReference>
<dbReference type="PhylomeDB" id="Q6U7Q0"/>
<dbReference type="TreeFam" id="TF338126"/>
<dbReference type="PathwayCommons" id="Q6U7Q0"/>
<dbReference type="SIGNOR" id="Q6U7Q0"/>
<dbReference type="BioGRID-ORCS" id="79692">
    <property type="hits" value="15 hits in 1136 CRISPR screens"/>
</dbReference>
<dbReference type="ChiTaRS" id="ZNF322">
    <property type="organism name" value="human"/>
</dbReference>
<dbReference type="GenomeRNAi" id="79692"/>
<dbReference type="Pharos" id="Q6U7Q0">
    <property type="development level" value="Tbio"/>
</dbReference>
<dbReference type="PRO" id="PR:Q6U7Q0"/>
<dbReference type="Proteomes" id="UP000005640">
    <property type="component" value="Chromosome 6"/>
</dbReference>
<dbReference type="RNAct" id="Q6U7Q0">
    <property type="molecule type" value="protein"/>
</dbReference>
<dbReference type="Bgee" id="ENSG00000181315">
    <property type="expression patterns" value="Expressed in cerebellar vermis and 109 other cell types or tissues"/>
</dbReference>
<dbReference type="ExpressionAtlas" id="Q6U7Q0">
    <property type="expression patterns" value="baseline and differential"/>
</dbReference>
<dbReference type="GO" id="GO:0005813">
    <property type="term" value="C:centrosome"/>
    <property type="evidence" value="ECO:0000314"/>
    <property type="project" value="HPA"/>
</dbReference>
<dbReference type="GO" id="GO:0005829">
    <property type="term" value="C:cytosol"/>
    <property type="evidence" value="ECO:0000314"/>
    <property type="project" value="HPA"/>
</dbReference>
<dbReference type="GO" id="GO:0005654">
    <property type="term" value="C:nucleoplasm"/>
    <property type="evidence" value="ECO:0000314"/>
    <property type="project" value="HPA"/>
</dbReference>
<dbReference type="GO" id="GO:0000981">
    <property type="term" value="F:DNA-binding transcription factor activity, RNA polymerase II-specific"/>
    <property type="evidence" value="ECO:0000318"/>
    <property type="project" value="GO_Central"/>
</dbReference>
<dbReference type="GO" id="GO:0000978">
    <property type="term" value="F:RNA polymerase II cis-regulatory region sequence-specific DNA binding"/>
    <property type="evidence" value="ECO:0000318"/>
    <property type="project" value="GO_Central"/>
</dbReference>
<dbReference type="GO" id="GO:0008270">
    <property type="term" value="F:zinc ion binding"/>
    <property type="evidence" value="ECO:0007669"/>
    <property type="project" value="UniProtKB-KW"/>
</dbReference>
<dbReference type="GO" id="GO:1902459">
    <property type="term" value="P:positive regulation of stem cell population maintenance"/>
    <property type="evidence" value="ECO:0007669"/>
    <property type="project" value="Ensembl"/>
</dbReference>
<dbReference type="GO" id="GO:0006357">
    <property type="term" value="P:regulation of transcription by RNA polymerase II"/>
    <property type="evidence" value="ECO:0000318"/>
    <property type="project" value="GO_Central"/>
</dbReference>
<dbReference type="FunFam" id="3.30.160.60:FF:002988">
    <property type="entry name" value="RCG45242, isoform CRA_a"/>
    <property type="match status" value="1"/>
</dbReference>
<dbReference type="FunFam" id="3.30.160.60:FF:000540">
    <property type="entry name" value="zinc finger protein 263 isoform X1"/>
    <property type="match status" value="1"/>
</dbReference>
<dbReference type="FunFam" id="3.30.160.60:FF:000269">
    <property type="entry name" value="Zinc finger protein 287"/>
    <property type="match status" value="1"/>
</dbReference>
<dbReference type="FunFam" id="3.30.160.60:FF:002323">
    <property type="entry name" value="Zinc finger protein 322"/>
    <property type="match status" value="1"/>
</dbReference>
<dbReference type="FunFam" id="3.30.160.60:FF:002339">
    <property type="entry name" value="Zinc finger protein 322"/>
    <property type="match status" value="1"/>
</dbReference>
<dbReference type="FunFam" id="3.30.160.60:FF:003317">
    <property type="entry name" value="Zinc finger protein 322"/>
    <property type="match status" value="1"/>
</dbReference>
<dbReference type="FunFam" id="3.30.160.60:FF:002343">
    <property type="entry name" value="Zinc finger protein 33A"/>
    <property type="match status" value="1"/>
</dbReference>
<dbReference type="FunFam" id="3.30.160.60:FF:000848">
    <property type="entry name" value="Zinc finger protein 35"/>
    <property type="match status" value="2"/>
</dbReference>
<dbReference type="FunFam" id="3.30.160.60:FF:001468">
    <property type="entry name" value="Zinc finger protein 672"/>
    <property type="match status" value="1"/>
</dbReference>
<dbReference type="Gene3D" id="3.30.160.60">
    <property type="entry name" value="Classic Zinc Finger"/>
    <property type="match status" value="11"/>
</dbReference>
<dbReference type="InterPro" id="IPR050758">
    <property type="entry name" value="Znf_C2H2-type"/>
</dbReference>
<dbReference type="InterPro" id="IPR036236">
    <property type="entry name" value="Znf_C2H2_sf"/>
</dbReference>
<dbReference type="InterPro" id="IPR013087">
    <property type="entry name" value="Znf_C2H2_type"/>
</dbReference>
<dbReference type="PANTHER" id="PTHR23234:SF8">
    <property type="entry name" value="C2H2-TYPE DOMAIN-CONTAINING PROTEIN"/>
    <property type="match status" value="1"/>
</dbReference>
<dbReference type="PANTHER" id="PTHR23234">
    <property type="entry name" value="ZNF44 PROTEIN"/>
    <property type="match status" value="1"/>
</dbReference>
<dbReference type="Pfam" id="PF00096">
    <property type="entry name" value="zf-C2H2"/>
    <property type="match status" value="7"/>
</dbReference>
<dbReference type="SMART" id="SM00355">
    <property type="entry name" value="ZnF_C2H2"/>
    <property type="match status" value="11"/>
</dbReference>
<dbReference type="SUPFAM" id="SSF57667">
    <property type="entry name" value="beta-beta-alpha zinc fingers"/>
    <property type="match status" value="7"/>
</dbReference>
<dbReference type="PROSITE" id="PS00028">
    <property type="entry name" value="ZINC_FINGER_C2H2_1"/>
    <property type="match status" value="8"/>
</dbReference>
<dbReference type="PROSITE" id="PS50157">
    <property type="entry name" value="ZINC_FINGER_C2H2_2"/>
    <property type="match status" value="11"/>
</dbReference>
<name>ZN322_HUMAN</name>
<organism>
    <name type="scientific">Homo sapiens</name>
    <name type="common">Human</name>
    <dbReference type="NCBI Taxonomy" id="9606"/>
    <lineage>
        <taxon>Eukaryota</taxon>
        <taxon>Metazoa</taxon>
        <taxon>Chordata</taxon>
        <taxon>Craniata</taxon>
        <taxon>Vertebrata</taxon>
        <taxon>Euteleostomi</taxon>
        <taxon>Mammalia</taxon>
        <taxon>Eutheria</taxon>
        <taxon>Euarchontoglires</taxon>
        <taxon>Primates</taxon>
        <taxon>Haplorrhini</taxon>
        <taxon>Catarrhini</taxon>
        <taxon>Hominidae</taxon>
        <taxon>Homo</taxon>
    </lineage>
</organism>
<keyword id="KW-0010">Activator</keyword>
<keyword id="KW-0963">Cytoplasm</keyword>
<keyword id="KW-0238">DNA-binding</keyword>
<keyword id="KW-0479">Metal-binding</keyword>
<keyword id="KW-0539">Nucleus</keyword>
<keyword id="KW-0597">Phosphoprotein</keyword>
<keyword id="KW-1267">Proteomics identification</keyword>
<keyword id="KW-1185">Reference proteome</keyword>
<keyword id="KW-0677">Repeat</keyword>
<keyword id="KW-0804">Transcription</keyword>
<keyword id="KW-0805">Transcription regulation</keyword>
<keyword id="KW-0862">Zinc</keyword>
<keyword id="KW-0863">Zinc-finger</keyword>
<feature type="chain" id="PRO_0000047529" description="Zinc finger protein 322">
    <location>
        <begin position="1"/>
        <end position="402"/>
    </location>
</feature>
<feature type="zinc finger region" description="C2H2-type 1; atypical" evidence="2">
    <location>
        <begin position="43"/>
        <end position="65"/>
    </location>
</feature>
<feature type="zinc finger region" description="C2H2-type 2" evidence="2">
    <location>
        <begin position="71"/>
        <end position="93"/>
    </location>
</feature>
<feature type="zinc finger region" description="C2H2-type 3" evidence="2">
    <location>
        <begin position="99"/>
        <end position="121"/>
    </location>
</feature>
<feature type="zinc finger region" description="C2H2-type 4" evidence="2">
    <location>
        <begin position="127"/>
        <end position="149"/>
    </location>
</feature>
<feature type="zinc finger region" description="C2H2-type 5" evidence="2">
    <location>
        <begin position="155"/>
        <end position="177"/>
    </location>
</feature>
<feature type="zinc finger region" description="C2H2-type 6" evidence="2">
    <location>
        <begin position="183"/>
        <end position="205"/>
    </location>
</feature>
<feature type="zinc finger region" description="C2H2-type 7" evidence="2">
    <location>
        <begin position="211"/>
        <end position="233"/>
    </location>
</feature>
<feature type="zinc finger region" description="C2H2-type 8" evidence="2">
    <location>
        <begin position="239"/>
        <end position="261"/>
    </location>
</feature>
<feature type="zinc finger region" description="C2H2-type 9" evidence="2">
    <location>
        <begin position="267"/>
        <end position="289"/>
    </location>
</feature>
<feature type="zinc finger region" description="C2H2-type 10; degenerate" evidence="2">
    <location>
        <begin position="293"/>
        <end position="315"/>
    </location>
</feature>
<feature type="zinc finger region" description="C2H2-type 11; degenerate" evidence="2">
    <location>
        <begin position="351"/>
        <end position="373"/>
    </location>
</feature>
<feature type="modified residue" description="Phosphoserine" evidence="5">
    <location>
        <position position="391"/>
    </location>
</feature>
<feature type="sequence conflict" description="In Ref. 1; AAQ85127." evidence="4" ref="1">
    <original>H</original>
    <variation>R</variation>
    <location>
        <position position="33"/>
    </location>
</feature>
<feature type="sequence conflict" description="In Ref. 2; BAB15637." evidence="4" ref="2">
    <original>C</original>
    <variation>S</variation>
    <location>
        <position position="73"/>
    </location>
</feature>
<feature type="sequence conflict" description="In Ref. 1; AAQ85127." evidence="4" ref="1">
    <original>N</original>
    <variation>H</variation>
    <location>
        <position position="94"/>
    </location>
</feature>
<feature type="sequence conflict" description="In Ref. 1; AAQ85127." evidence="4" ref="1">
    <original>C</original>
    <variation>R</variation>
    <location>
        <position position="101"/>
    </location>
</feature>
<feature type="sequence conflict" description="In Ref. 1; AAQ85127." evidence="4" ref="1">
    <original>H</original>
    <variation>R</variation>
    <location>
        <position position="373"/>
    </location>
</feature>
<feature type="sequence conflict" description="In Ref. 1; AAQ85127." evidence="4" ref="1">
    <original>A</original>
    <variation>V</variation>
    <location>
        <position position="398"/>
    </location>
</feature>
<protein>
    <recommendedName>
        <fullName>Zinc finger protein 322</fullName>
    </recommendedName>
    <alternativeName>
        <fullName>Zinc finger protein 322A</fullName>
    </alternativeName>
    <alternativeName>
        <fullName>Zinc finger protein 388</fullName>
    </alternativeName>
    <alternativeName>
        <fullName>Zinc finger protein 489</fullName>
    </alternativeName>
</protein>
<accession>Q6U7Q0</accession>
<accession>A8K1X3</accession>
<accession>Q0VDH6</accession>
<accession>Q6B0G2</accession>
<accession>Q86W72</accession>
<accession>Q9H5I9</accession>
<comment type="function">
    <text evidence="1 3">Transcriptional activator (PubMed:15555580). Important for maintenance of pluripotency in embryonic stem cells (By similarity). Binds directly to the POU5F1 distal enhancer and the NANOG proximal promoter, and enhances expression of both genes (By similarity). Can also bind to numerous other gene promoters and regulates expression of many other pluripotency factors, either directly or indirectly (By similarity). Promotes inhibition of MAPK signaling during embryonic stem cell differentiation (By similarity).</text>
</comment>
<comment type="subunit">
    <text evidence="1">Interacts with POU5F1.</text>
</comment>
<comment type="subcellular location">
    <subcellularLocation>
        <location evidence="3">Cytoplasm</location>
    </subcellularLocation>
    <subcellularLocation>
        <location evidence="3">Nucleus</location>
    </subcellularLocation>
    <text evidence="3">Mainly found in the nucleus.</text>
</comment>
<comment type="tissue specificity">
    <text evidence="3">Ubiquitous. Highly expressed in heart and skeletal muscle.</text>
</comment>
<comment type="developmental stage">
    <text evidence="3">Expressed in embryo as early as the 11th week of gestation.</text>
</comment>
<comment type="miscellaneous">
    <text evidence="1">Significantly enhances POU5F1/OCT4-SOX2-KLF4-MYC (OSKM) mediated reprogramming of mouse embryonic fibroblasts into induced pluripotent stem cells, and can also substitute for SOX2 in this process.</text>
</comment>
<comment type="similarity">
    <text evidence="4">Belongs to the krueppel C2H2-type zinc-finger protein family.</text>
</comment>
<comment type="sequence caution" evidence="4">
    <conflict type="erroneous initiation">
        <sequence resource="EMBL-CDS" id="BAB15637"/>
    </conflict>
    <text>Truncated N-terminus.</text>
</comment>
<evidence type="ECO:0000250" key="1">
    <source>
        <dbReference type="UniProtKB" id="Q8BZ89"/>
    </source>
</evidence>
<evidence type="ECO:0000255" key="2">
    <source>
        <dbReference type="PROSITE-ProRule" id="PRU00042"/>
    </source>
</evidence>
<evidence type="ECO:0000269" key="3">
    <source>
    </source>
</evidence>
<evidence type="ECO:0000305" key="4"/>
<evidence type="ECO:0007744" key="5">
    <source>
    </source>
</evidence>
<reference key="1">
    <citation type="journal article" date="2004" name="Biochem. Biophys. Res. Commun.">
        <title>ZNF322, a novel human C(2)H(2) Kruppel-like zinc-finger protein, regulates transcriptional activation in MAPK signaling pathways.</title>
        <authorList>
            <person name="Li Y."/>
            <person name="Wang Y."/>
            <person name="Zhang C."/>
            <person name="Yuan W."/>
            <person name="Wang J."/>
            <person name="Zhu C."/>
            <person name="Chen L."/>
            <person name="Huang W."/>
            <person name="Zeng W."/>
            <person name="Wu X."/>
            <person name="Liu M."/>
        </authorList>
    </citation>
    <scope>NUCLEOTIDE SEQUENCE [MRNA]</scope>
    <scope>FUNCTION IN TRANSCRIPTIONAL ACTIVATION</scope>
    <scope>SUBCELLULAR LOCATION</scope>
    <scope>TISSUE SPECIFICITY</scope>
    <scope>DEVELOPMENTAL STAGE</scope>
    <source>
        <tissue>Embryonic heart</tissue>
    </source>
</reference>
<reference key="2">
    <citation type="journal article" date="2004" name="Nat. Genet.">
        <title>Complete sequencing and characterization of 21,243 full-length human cDNAs.</title>
        <authorList>
            <person name="Ota T."/>
            <person name="Suzuki Y."/>
            <person name="Nishikawa T."/>
            <person name="Otsuki T."/>
            <person name="Sugiyama T."/>
            <person name="Irie R."/>
            <person name="Wakamatsu A."/>
            <person name="Hayashi K."/>
            <person name="Sato H."/>
            <person name="Nagai K."/>
            <person name="Kimura K."/>
            <person name="Makita H."/>
            <person name="Sekine M."/>
            <person name="Obayashi M."/>
            <person name="Nishi T."/>
            <person name="Shibahara T."/>
            <person name="Tanaka T."/>
            <person name="Ishii S."/>
            <person name="Yamamoto J."/>
            <person name="Saito K."/>
            <person name="Kawai Y."/>
            <person name="Isono Y."/>
            <person name="Nakamura Y."/>
            <person name="Nagahari K."/>
            <person name="Murakami K."/>
            <person name="Yasuda T."/>
            <person name="Iwayanagi T."/>
            <person name="Wagatsuma M."/>
            <person name="Shiratori A."/>
            <person name="Sudo H."/>
            <person name="Hosoiri T."/>
            <person name="Kaku Y."/>
            <person name="Kodaira H."/>
            <person name="Kondo H."/>
            <person name="Sugawara M."/>
            <person name="Takahashi M."/>
            <person name="Kanda K."/>
            <person name="Yokoi T."/>
            <person name="Furuya T."/>
            <person name="Kikkawa E."/>
            <person name="Omura Y."/>
            <person name="Abe K."/>
            <person name="Kamihara K."/>
            <person name="Katsuta N."/>
            <person name="Sato K."/>
            <person name="Tanikawa M."/>
            <person name="Yamazaki M."/>
            <person name="Ninomiya K."/>
            <person name="Ishibashi T."/>
            <person name="Yamashita H."/>
            <person name="Murakawa K."/>
            <person name="Fujimori K."/>
            <person name="Tanai H."/>
            <person name="Kimata M."/>
            <person name="Watanabe M."/>
            <person name="Hiraoka S."/>
            <person name="Chiba Y."/>
            <person name="Ishida S."/>
            <person name="Ono Y."/>
            <person name="Takiguchi S."/>
            <person name="Watanabe S."/>
            <person name="Yosida M."/>
            <person name="Hotuta T."/>
            <person name="Kusano J."/>
            <person name="Kanehori K."/>
            <person name="Takahashi-Fujii A."/>
            <person name="Hara H."/>
            <person name="Tanase T.-O."/>
            <person name="Nomura Y."/>
            <person name="Togiya S."/>
            <person name="Komai F."/>
            <person name="Hara R."/>
            <person name="Takeuchi K."/>
            <person name="Arita M."/>
            <person name="Imose N."/>
            <person name="Musashino K."/>
            <person name="Yuuki H."/>
            <person name="Oshima A."/>
            <person name="Sasaki N."/>
            <person name="Aotsuka S."/>
            <person name="Yoshikawa Y."/>
            <person name="Matsunawa H."/>
            <person name="Ichihara T."/>
            <person name="Shiohata N."/>
            <person name="Sano S."/>
            <person name="Moriya S."/>
            <person name="Momiyama H."/>
            <person name="Satoh N."/>
            <person name="Takami S."/>
            <person name="Terashima Y."/>
            <person name="Suzuki O."/>
            <person name="Nakagawa S."/>
            <person name="Senoh A."/>
            <person name="Mizoguchi H."/>
            <person name="Goto Y."/>
            <person name="Shimizu F."/>
            <person name="Wakebe H."/>
            <person name="Hishigaki H."/>
            <person name="Watanabe T."/>
            <person name="Sugiyama A."/>
            <person name="Takemoto M."/>
            <person name="Kawakami B."/>
            <person name="Yamazaki M."/>
            <person name="Watanabe K."/>
            <person name="Kumagai A."/>
            <person name="Itakura S."/>
            <person name="Fukuzumi Y."/>
            <person name="Fujimori Y."/>
            <person name="Komiyama M."/>
            <person name="Tashiro H."/>
            <person name="Tanigami A."/>
            <person name="Fujiwara T."/>
            <person name="Ono T."/>
            <person name="Yamada K."/>
            <person name="Fujii Y."/>
            <person name="Ozaki K."/>
            <person name="Hirao M."/>
            <person name="Ohmori Y."/>
            <person name="Kawabata A."/>
            <person name="Hikiji T."/>
            <person name="Kobatake N."/>
            <person name="Inagaki H."/>
            <person name="Ikema Y."/>
            <person name="Okamoto S."/>
            <person name="Okitani R."/>
            <person name="Kawakami T."/>
            <person name="Noguchi S."/>
            <person name="Itoh T."/>
            <person name="Shigeta K."/>
            <person name="Senba T."/>
            <person name="Matsumura K."/>
            <person name="Nakajima Y."/>
            <person name="Mizuno T."/>
            <person name="Morinaga M."/>
            <person name="Sasaki M."/>
            <person name="Togashi T."/>
            <person name="Oyama M."/>
            <person name="Hata H."/>
            <person name="Watanabe M."/>
            <person name="Komatsu T."/>
            <person name="Mizushima-Sugano J."/>
            <person name="Satoh T."/>
            <person name="Shirai Y."/>
            <person name="Takahashi Y."/>
            <person name="Nakagawa K."/>
            <person name="Okumura K."/>
            <person name="Nagase T."/>
            <person name="Nomura N."/>
            <person name="Kikuchi H."/>
            <person name="Masuho Y."/>
            <person name="Yamashita R."/>
            <person name="Nakai K."/>
            <person name="Yada T."/>
            <person name="Nakamura Y."/>
            <person name="Ohara O."/>
            <person name="Isogai T."/>
            <person name="Sugano S."/>
        </authorList>
    </citation>
    <scope>NUCLEOTIDE SEQUENCE [LARGE SCALE MRNA]</scope>
    <source>
        <tissue>Hepatoma</tissue>
        <tissue>Hippocampus</tissue>
    </source>
</reference>
<reference key="3">
    <citation type="journal article" date="2004" name="Genome Res.">
        <title>The status, quality, and expansion of the NIH full-length cDNA project: the Mammalian Gene Collection (MGC).</title>
        <authorList>
            <consortium name="The MGC Project Team"/>
        </authorList>
    </citation>
    <scope>NUCLEOTIDE SEQUENCE [LARGE SCALE MRNA]</scope>
    <source>
        <tissue>Brain</tissue>
        <tissue>Uterus</tissue>
    </source>
</reference>
<reference key="4">
    <citation type="journal article" date="2013" name="J. Proteome Res.">
        <title>Toward a comprehensive characterization of a human cancer cell phosphoproteome.</title>
        <authorList>
            <person name="Zhou H."/>
            <person name="Di Palma S."/>
            <person name="Preisinger C."/>
            <person name="Peng M."/>
            <person name="Polat A.N."/>
            <person name="Heck A.J."/>
            <person name="Mohammed S."/>
        </authorList>
    </citation>
    <scope>PHOSPHORYLATION [LARGE SCALE ANALYSIS] AT SER-391</scope>
    <scope>IDENTIFICATION BY MASS SPECTROMETRY [LARGE SCALE ANALYSIS]</scope>
    <source>
        <tissue>Erythroleukemia</tissue>
    </source>
</reference>
<proteinExistence type="evidence at protein level"/>
<gene>
    <name type="primary">ZNF322</name>
    <name type="synonym">ZNF322A</name>
    <name type="synonym">ZNF388</name>
    <name type="synonym">ZNF489</name>
</gene>